<comment type="function">
    <text evidence="2">Promotes lrp6 phosphorylation by casein kinases and thereby plays a role in Wnt signaling. May be a membrane scaffold protein involved in the self-aggregation of lrp6 further enhancing its activity. Required for neural crest formation.</text>
</comment>
<comment type="subunit">
    <text evidence="2">Interacts with lrp6. Interacts with casein kinases.</text>
</comment>
<comment type="subcellular location">
    <subcellularLocation>
        <location evidence="3">Membrane</location>
        <topology evidence="3">Multi-pass membrane protein</topology>
    </subcellularLocation>
    <subcellularLocation>
        <location evidence="2">Cell membrane</location>
    </subcellularLocation>
    <subcellularLocation>
        <location evidence="2">Cytoplasmic vesicle</location>
    </subcellularLocation>
    <text>Largely located to vesicle-like structures.</text>
</comment>
<comment type="developmental stage">
    <text evidence="2">Expression widely distributed both maternally and zygotically. During gastrulation, strong expression in the posterior end near the blastopore.</text>
</comment>
<comment type="disruption phenotype">
    <text evidence="2">Morphants have defects in neural crest formation. At the tadpole stage, animals are often less pigmented with ventrally bent tails. Embryos develop smaller eyes and forebrain structures.</text>
</comment>
<comment type="similarity">
    <text evidence="3">Belongs to the TMEM198 family.</text>
</comment>
<keyword id="KW-1003">Cell membrane</keyword>
<keyword id="KW-0968">Cytoplasmic vesicle</keyword>
<keyword id="KW-0217">Developmental protein</keyword>
<keyword id="KW-0472">Membrane</keyword>
<keyword id="KW-1185">Reference proteome</keyword>
<keyword id="KW-0812">Transmembrane</keyword>
<keyword id="KW-1133">Transmembrane helix</keyword>
<keyword id="KW-0879">Wnt signaling pathway</keyword>
<sequence>MLQNIDNRTVDTGQDDPFDGFCSLESERHYDVVPTVVCSLCCLFGLVYTFFGYRCFKAIMFLSGLLAGSAVIFLLCYKERIMDTQLSLELSAGIALGIGLLCGLVTMLVHSVGLFMTGLLLGLLLAIASLVGLEQFYHPPSAWIPVGLMMGSAMLFAVLTLQWQKLFTVVSTATFGAAILTVCTDYFIELMLLVQYVYDRLRLETSHPLCWYSWVILGMWPVLSVLGIVVQWKLTAEGFSHTDVIISRRQKRLQLLRIRQKDAKKRQNVASQEGTYRRKANPMKRYTGDILAPSYLQSLRERQTGTGTSMSSLSTNMQTIVDMDYECGSTVPLTATTPVIHV</sequence>
<gene>
    <name type="primary">tmem198</name>
</gene>
<accession>Q6DFQ7</accession>
<accession>F6TVU3</accession>
<dbReference type="EMBL" id="AAMC01034906">
    <property type="status" value="NOT_ANNOTATED_CDS"/>
    <property type="molecule type" value="Genomic_DNA"/>
</dbReference>
<dbReference type="EMBL" id="AAMC01034907">
    <property type="status" value="NOT_ANNOTATED_CDS"/>
    <property type="molecule type" value="Genomic_DNA"/>
</dbReference>
<dbReference type="EMBL" id="AAMC01034908">
    <property type="status" value="NOT_ANNOTATED_CDS"/>
    <property type="molecule type" value="Genomic_DNA"/>
</dbReference>
<dbReference type="EMBL" id="BC076677">
    <property type="protein sequence ID" value="AAH76677.1"/>
    <property type="molecule type" value="mRNA"/>
</dbReference>
<dbReference type="FunCoup" id="Q6DFQ7">
    <property type="interactions" value="442"/>
</dbReference>
<dbReference type="STRING" id="8364.ENSXETP00000053812"/>
<dbReference type="PaxDb" id="8364-ENSXETP00000047267"/>
<dbReference type="DNASU" id="448513"/>
<dbReference type="KEGG" id="xtr:448513"/>
<dbReference type="CTD" id="448513"/>
<dbReference type="eggNOG" id="ENOG502QS1E">
    <property type="taxonomic scope" value="Eukaryota"/>
</dbReference>
<dbReference type="HOGENOM" id="CLU_043600_0_0_1"/>
<dbReference type="InParanoid" id="Q6DFQ7"/>
<dbReference type="OrthoDB" id="115781at2759"/>
<dbReference type="TreeFam" id="TF323324"/>
<dbReference type="Proteomes" id="UP000008143">
    <property type="component" value="Chromosome 2"/>
</dbReference>
<dbReference type="GO" id="GO:0031410">
    <property type="term" value="C:cytoplasmic vesicle"/>
    <property type="evidence" value="ECO:0007669"/>
    <property type="project" value="UniProtKB-KW"/>
</dbReference>
<dbReference type="GO" id="GO:0005886">
    <property type="term" value="C:plasma membrane"/>
    <property type="evidence" value="ECO:0000314"/>
    <property type="project" value="UniProtKB"/>
</dbReference>
<dbReference type="GO" id="GO:0012506">
    <property type="term" value="C:vesicle membrane"/>
    <property type="evidence" value="ECO:0000314"/>
    <property type="project" value="UniProtKB"/>
</dbReference>
<dbReference type="GO" id="GO:0016055">
    <property type="term" value="P:Wnt signaling pathway"/>
    <property type="evidence" value="ECO:0007669"/>
    <property type="project" value="UniProtKB-KW"/>
</dbReference>
<dbReference type="InterPro" id="IPR025256">
    <property type="entry name" value="TM7S3/TM198-like_dom"/>
</dbReference>
<dbReference type="InterPro" id="IPR040236">
    <property type="entry name" value="TMEM198"/>
</dbReference>
<dbReference type="PANTHER" id="PTHR31247:SF17">
    <property type="entry name" value="DUF4203 DOMAIN-CONTAINING PROTEIN"/>
    <property type="match status" value="1"/>
</dbReference>
<dbReference type="PANTHER" id="PTHR31247">
    <property type="entry name" value="TRANSMEMBRANE PROTEIN 198 FAMILY MEMBER"/>
    <property type="match status" value="1"/>
</dbReference>
<dbReference type="Pfam" id="PF13886">
    <property type="entry name" value="TM7S3_TM198"/>
    <property type="match status" value="1"/>
</dbReference>
<name>TM198_XENTR</name>
<feature type="chain" id="PRO_0000422272" description="Transmembrane protein 198">
    <location>
        <begin position="1"/>
        <end position="342"/>
    </location>
</feature>
<feature type="transmembrane region" description="Helical" evidence="1">
    <location>
        <begin position="32"/>
        <end position="52"/>
    </location>
</feature>
<feature type="transmembrane region" description="Helical" evidence="1">
    <location>
        <begin position="55"/>
        <end position="75"/>
    </location>
</feature>
<feature type="transmembrane region" description="Helical" evidence="1">
    <location>
        <begin position="90"/>
        <end position="110"/>
    </location>
</feature>
<feature type="transmembrane region" description="Helical" evidence="1">
    <location>
        <begin position="112"/>
        <end position="132"/>
    </location>
</feature>
<feature type="transmembrane region" description="Helical" evidence="1">
    <location>
        <begin position="141"/>
        <end position="161"/>
    </location>
</feature>
<feature type="transmembrane region" description="Helical" evidence="1">
    <location>
        <begin position="174"/>
        <end position="194"/>
    </location>
</feature>
<feature type="transmembrane region" description="Helical" evidence="1">
    <location>
        <begin position="210"/>
        <end position="230"/>
    </location>
</feature>
<feature type="mutagenesis site" description="Very weak enhancement of lrp6 phosphorylation; when associated with A-171; A-172 and R-174." evidence="2">
    <original>T</original>
    <variation>P</variation>
    <location>
        <position position="168"/>
    </location>
</feature>
<feature type="mutagenesis site" description="Very weak enhancement of lrp6 phosphorylation; when associated with P-168; A-172 and R-174." evidence="2">
    <original>S</original>
    <variation>A</variation>
    <location>
        <position position="171"/>
    </location>
</feature>
<feature type="mutagenesis site" description="Very weak enhancement of lrp6 phosphorylation; when associated with P-168; A-171 and R-174." evidence="2">
    <original>T</original>
    <variation>A</variation>
    <location>
        <position position="172"/>
    </location>
</feature>
<feature type="mutagenesis site" description="Very weak enhancement of lrp6 phosphorylation; when associated with P-168; A-171 and A-172." evidence="2">
    <original>T</original>
    <variation>R</variation>
    <location>
        <position position="174"/>
    </location>
</feature>
<proteinExistence type="evidence at protein level"/>
<protein>
    <recommendedName>
        <fullName>Transmembrane protein 198</fullName>
    </recommendedName>
</protein>
<evidence type="ECO:0000255" key="1"/>
<evidence type="ECO:0000269" key="2">
    <source>
    </source>
</evidence>
<evidence type="ECO:0000305" key="3"/>
<organism>
    <name type="scientific">Xenopus tropicalis</name>
    <name type="common">Western clawed frog</name>
    <name type="synonym">Silurana tropicalis</name>
    <dbReference type="NCBI Taxonomy" id="8364"/>
    <lineage>
        <taxon>Eukaryota</taxon>
        <taxon>Metazoa</taxon>
        <taxon>Chordata</taxon>
        <taxon>Craniata</taxon>
        <taxon>Vertebrata</taxon>
        <taxon>Euteleostomi</taxon>
        <taxon>Amphibia</taxon>
        <taxon>Batrachia</taxon>
        <taxon>Anura</taxon>
        <taxon>Pipoidea</taxon>
        <taxon>Pipidae</taxon>
        <taxon>Xenopodinae</taxon>
        <taxon>Xenopus</taxon>
        <taxon>Silurana</taxon>
    </lineage>
</organism>
<reference key="1">
    <citation type="journal article" date="2010" name="Science">
        <title>The genome of the Western clawed frog Xenopus tropicalis.</title>
        <authorList>
            <person name="Hellsten U."/>
            <person name="Harland R.M."/>
            <person name="Gilchrist M.J."/>
            <person name="Hendrix D."/>
            <person name="Jurka J."/>
            <person name="Kapitonov V."/>
            <person name="Ovcharenko I."/>
            <person name="Putnam N.H."/>
            <person name="Shu S."/>
            <person name="Taher L."/>
            <person name="Blitz I.L."/>
            <person name="Blumberg B."/>
            <person name="Dichmann D.S."/>
            <person name="Dubchak I."/>
            <person name="Amaya E."/>
            <person name="Detter J.C."/>
            <person name="Fletcher R."/>
            <person name="Gerhard D.S."/>
            <person name="Goodstein D."/>
            <person name="Graves T."/>
            <person name="Grigoriev I.V."/>
            <person name="Grimwood J."/>
            <person name="Kawashima T."/>
            <person name="Lindquist E."/>
            <person name="Lucas S.M."/>
            <person name="Mead P.E."/>
            <person name="Mitros T."/>
            <person name="Ogino H."/>
            <person name="Ohta Y."/>
            <person name="Poliakov A.V."/>
            <person name="Pollet N."/>
            <person name="Robert J."/>
            <person name="Salamov A."/>
            <person name="Sater A.K."/>
            <person name="Schmutz J."/>
            <person name="Terry A."/>
            <person name="Vize P.D."/>
            <person name="Warren W.C."/>
            <person name="Wells D."/>
            <person name="Wills A."/>
            <person name="Wilson R.K."/>
            <person name="Zimmerman L.B."/>
            <person name="Zorn A.M."/>
            <person name="Grainger R."/>
            <person name="Grammer T."/>
            <person name="Khokha M.K."/>
            <person name="Richardson P.M."/>
            <person name="Rokhsar D.S."/>
        </authorList>
    </citation>
    <scope>NUCLEOTIDE SEQUENCE [LARGE SCALE GENOMIC DNA]</scope>
</reference>
<reference key="2">
    <citation type="submission" date="2004-07" db="EMBL/GenBank/DDBJ databases">
        <authorList>
            <consortium name="NIH - Xenopus Gene Collection (XGC) project"/>
        </authorList>
    </citation>
    <scope>NUCLEOTIDE SEQUENCE [LARGE SCALE MRNA]</scope>
    <source>
        <tissue>Embryo</tissue>
    </source>
</reference>
<reference key="3">
    <citation type="journal article" date="2011" name="Mol. Cell. Biol.">
        <title>Transmembrane protein 198 promotes LRP6 phosphorylation and Wnt signaling activation.</title>
        <authorList>
            <person name="Liang J."/>
            <person name="Fu Y."/>
            <person name="Cruciat C.M."/>
            <person name="Jia S."/>
            <person name="Wang Y."/>
            <person name="Tong Z."/>
            <person name="Tao Q."/>
            <person name="Ingelfinger D."/>
            <person name="Boutros M."/>
            <person name="Meng A."/>
            <person name="Niehrs C."/>
            <person name="Wu W."/>
        </authorList>
    </citation>
    <scope>FUNCTION</scope>
    <scope>INTERACTION WITH LRP6 AND CASEIN KINASES</scope>
    <scope>DEVELOPMENTAL STAGE</scope>
    <scope>DISRUPTION PHENOTYPE</scope>
    <scope>SUBCELLULAR LOCATION</scope>
    <scope>MUTAGENESIS OF THR-168; SER-171; THR-172 AND THR-174</scope>
</reference>